<comment type="function">
    <text evidence="3">Anti-inflammatory antagonist of interleukin-1 family of proinflammatory cytokines such as interleukin-1beta/IL1B and interleukin-1alpha/IL1A. Protects from immune dysregulation and uncontrolled systemic inflammation triggered by IL1 for a range of innate stimulatory agents such as pathogens.</text>
</comment>
<comment type="subcellular location">
    <subcellularLocation>
        <location evidence="2">Secreted</location>
    </subcellularLocation>
</comment>
<comment type="similarity">
    <text evidence="5">Belongs to the IL-1 family.</text>
</comment>
<keyword id="KW-1015">Disulfide bond</keyword>
<keyword id="KW-0325">Glycoprotein</keyword>
<keyword id="KW-1185">Reference proteome</keyword>
<keyword id="KW-0964">Secreted</keyword>
<keyword id="KW-0732">Signal</keyword>
<gene>
    <name type="primary">IL1RN</name>
</gene>
<protein>
    <recommendedName>
        <fullName>Interleukin-1 receptor antagonist protein</fullName>
        <shortName>IL-1RN</shortName>
        <shortName>IL-1ra</shortName>
        <shortName>IRAP</shortName>
    </recommendedName>
    <alternativeName>
        <fullName>IL1 inhibitor</fullName>
    </alternativeName>
</protein>
<feature type="signal peptide" evidence="4">
    <location>
        <begin position="1"/>
        <end position="25"/>
    </location>
</feature>
<feature type="chain" id="PRO_0000015326" description="Interleukin-1 receptor antagonist protein">
    <location>
        <begin position="26"/>
        <end position="176"/>
    </location>
</feature>
<feature type="glycosylation site" description="N-linked (GlcNAc...) asparagine" evidence="4">
    <location>
        <position position="109"/>
    </location>
</feature>
<feature type="disulfide bond" evidence="1">
    <location>
        <begin position="91"/>
        <end position="141"/>
    </location>
</feature>
<feature type="sequence conflict" description="In Ref. 2; AAG36777." evidence="5" ref="2">
    <original>P</original>
    <variation>L</variation>
    <location>
        <position position="155"/>
    </location>
</feature>
<proteinExistence type="evidence at transcript level"/>
<dbReference type="EMBL" id="AY026462">
    <property type="protein sequence ID" value="AAK01472.1"/>
    <property type="molecule type" value="mRNA"/>
</dbReference>
<dbReference type="EMBL" id="AF216526">
    <property type="protein sequence ID" value="AAG36777.1"/>
    <property type="molecule type" value="mRNA"/>
</dbReference>
<dbReference type="RefSeq" id="NP_001003096.1">
    <property type="nucleotide sequence ID" value="NM_001003096.3"/>
</dbReference>
<dbReference type="SMR" id="Q9BEH0"/>
<dbReference type="FunCoup" id="Q9BEH0">
    <property type="interactions" value="13"/>
</dbReference>
<dbReference type="STRING" id="9615.ENSCAFP00000036995"/>
<dbReference type="GlyCosmos" id="Q9BEH0">
    <property type="glycosylation" value="1 site, No reported glycans"/>
</dbReference>
<dbReference type="PaxDb" id="9612-ENSCAFP00000010796"/>
<dbReference type="Ensembl" id="ENSCAFT00000104578.1">
    <property type="protein sequence ID" value="ENSCAFP00000073905.1"/>
    <property type="gene ID" value="ENSCAFG00000007277.6"/>
</dbReference>
<dbReference type="Ensembl" id="ENSCAFT00030010092.1">
    <property type="protein sequence ID" value="ENSCAFP00030008842.1"/>
    <property type="gene ID" value="ENSCAFG00030005460.1"/>
</dbReference>
<dbReference type="Ensembl" id="ENSCAFT00040025225.1">
    <property type="protein sequence ID" value="ENSCAFP00040021927.1"/>
    <property type="gene ID" value="ENSCAFG00040013573.1"/>
</dbReference>
<dbReference type="Ensembl" id="ENSCAFT00845021339.1">
    <property type="protein sequence ID" value="ENSCAFP00845016781.1"/>
    <property type="gene ID" value="ENSCAFG00845011971.1"/>
</dbReference>
<dbReference type="GeneID" id="403660"/>
<dbReference type="KEGG" id="cfa:403660"/>
<dbReference type="CTD" id="3557"/>
<dbReference type="VEuPathDB" id="HostDB:ENSCAFG00845011971"/>
<dbReference type="VGNC" id="VGNC:41962">
    <property type="gene designation" value="IL1RN"/>
</dbReference>
<dbReference type="eggNOG" id="ENOG502S5F0">
    <property type="taxonomic scope" value="Eukaryota"/>
</dbReference>
<dbReference type="GeneTree" id="ENSGT00950000182943"/>
<dbReference type="HOGENOM" id="CLU_095373_2_0_1"/>
<dbReference type="InParanoid" id="Q9BEH0"/>
<dbReference type="OMA" id="WYLCTAL"/>
<dbReference type="OrthoDB" id="9274793at2759"/>
<dbReference type="TreeFam" id="TF300203"/>
<dbReference type="Reactome" id="R-CFA-9020702">
    <property type="pathway name" value="Interleukin-1 signaling"/>
</dbReference>
<dbReference type="Proteomes" id="UP000002254">
    <property type="component" value="Chromosome 17"/>
</dbReference>
<dbReference type="Proteomes" id="UP000694429">
    <property type="component" value="Chromosome 17"/>
</dbReference>
<dbReference type="Proteomes" id="UP000694542">
    <property type="component" value="Chromosome 17"/>
</dbReference>
<dbReference type="Proteomes" id="UP000805418">
    <property type="component" value="Chromosome 17"/>
</dbReference>
<dbReference type="GO" id="GO:0005813">
    <property type="term" value="C:centrosome"/>
    <property type="evidence" value="ECO:0007669"/>
    <property type="project" value="Ensembl"/>
</dbReference>
<dbReference type="GO" id="GO:0005829">
    <property type="term" value="C:cytosol"/>
    <property type="evidence" value="ECO:0007669"/>
    <property type="project" value="Ensembl"/>
</dbReference>
<dbReference type="GO" id="GO:0005615">
    <property type="term" value="C:extracellular space"/>
    <property type="evidence" value="ECO:0007669"/>
    <property type="project" value="Ensembl"/>
</dbReference>
<dbReference type="GO" id="GO:0005654">
    <property type="term" value="C:nucleoplasm"/>
    <property type="evidence" value="ECO:0007669"/>
    <property type="project" value="Ensembl"/>
</dbReference>
<dbReference type="GO" id="GO:0031982">
    <property type="term" value="C:vesicle"/>
    <property type="evidence" value="ECO:0007669"/>
    <property type="project" value="Ensembl"/>
</dbReference>
<dbReference type="GO" id="GO:0005125">
    <property type="term" value="F:cytokine activity"/>
    <property type="evidence" value="ECO:0007669"/>
    <property type="project" value="InterPro"/>
</dbReference>
<dbReference type="GO" id="GO:0045352">
    <property type="term" value="F:interleukin-1 type I receptor antagonist activity"/>
    <property type="evidence" value="ECO:0007669"/>
    <property type="project" value="Ensembl"/>
</dbReference>
<dbReference type="GO" id="GO:0045353">
    <property type="term" value="F:interleukin-1 type II receptor antagonist activity"/>
    <property type="evidence" value="ECO:0007669"/>
    <property type="project" value="Ensembl"/>
</dbReference>
<dbReference type="GO" id="GO:0005150">
    <property type="term" value="F:interleukin-1, type I receptor binding"/>
    <property type="evidence" value="ECO:0007669"/>
    <property type="project" value="Ensembl"/>
</dbReference>
<dbReference type="GO" id="GO:0005151">
    <property type="term" value="F:interleukin-1, type II receptor binding"/>
    <property type="evidence" value="ECO:0007669"/>
    <property type="project" value="Ensembl"/>
</dbReference>
<dbReference type="GO" id="GO:0006955">
    <property type="term" value="P:immune response"/>
    <property type="evidence" value="ECO:0007669"/>
    <property type="project" value="InterPro"/>
</dbReference>
<dbReference type="GO" id="GO:0006954">
    <property type="term" value="P:inflammatory response"/>
    <property type="evidence" value="ECO:0007669"/>
    <property type="project" value="InterPro"/>
</dbReference>
<dbReference type="GO" id="GO:0030073">
    <property type="term" value="P:insulin secretion"/>
    <property type="evidence" value="ECO:0007669"/>
    <property type="project" value="Ensembl"/>
</dbReference>
<dbReference type="GO" id="GO:0006629">
    <property type="term" value="P:lipid metabolic process"/>
    <property type="evidence" value="ECO:0007669"/>
    <property type="project" value="Ensembl"/>
</dbReference>
<dbReference type="GO" id="GO:0034115">
    <property type="term" value="P:negative regulation of heterotypic cell-cell adhesion"/>
    <property type="evidence" value="ECO:0007669"/>
    <property type="project" value="Ensembl"/>
</dbReference>
<dbReference type="GO" id="GO:2000660">
    <property type="term" value="P:negative regulation of interleukin-1-mediated signaling pathway"/>
    <property type="evidence" value="ECO:0007669"/>
    <property type="project" value="Ensembl"/>
</dbReference>
<dbReference type="GO" id="GO:0051384">
    <property type="term" value="P:response to glucocorticoid"/>
    <property type="evidence" value="ECO:0007669"/>
    <property type="project" value="Ensembl"/>
</dbReference>
<dbReference type="FunFam" id="2.80.10.50:FF:000013">
    <property type="entry name" value="Interleukin-1"/>
    <property type="match status" value="1"/>
</dbReference>
<dbReference type="Gene3D" id="2.80.10.50">
    <property type="match status" value="1"/>
</dbReference>
<dbReference type="InterPro" id="IPR020877">
    <property type="entry name" value="IL-1_CS"/>
</dbReference>
<dbReference type="InterPro" id="IPR000975">
    <property type="entry name" value="IL-1_fam"/>
</dbReference>
<dbReference type="InterPro" id="IPR003297">
    <property type="entry name" value="IL-1RA/IL-36"/>
</dbReference>
<dbReference type="InterPro" id="IPR008996">
    <property type="entry name" value="IL1/FGF"/>
</dbReference>
<dbReference type="PANTHER" id="PTHR10078">
    <property type="entry name" value="INTERLEUKIN-1 FAMILY MEMBER"/>
    <property type="match status" value="1"/>
</dbReference>
<dbReference type="PANTHER" id="PTHR10078:SF28">
    <property type="entry name" value="INTERLEUKIN-1 RECEPTOR ANTAGONIST PROTEIN"/>
    <property type="match status" value="1"/>
</dbReference>
<dbReference type="Pfam" id="PF00340">
    <property type="entry name" value="IL1"/>
    <property type="match status" value="1"/>
</dbReference>
<dbReference type="PRINTS" id="PR00264">
    <property type="entry name" value="INTERLEUKIN1"/>
</dbReference>
<dbReference type="PRINTS" id="PR01360">
    <property type="entry name" value="INTRLEUKIN1X"/>
</dbReference>
<dbReference type="SMART" id="SM00125">
    <property type="entry name" value="IL1"/>
    <property type="match status" value="1"/>
</dbReference>
<dbReference type="SUPFAM" id="SSF50353">
    <property type="entry name" value="Cytokine"/>
    <property type="match status" value="1"/>
</dbReference>
<dbReference type="PROSITE" id="PS00253">
    <property type="entry name" value="INTERLEUKIN_1"/>
    <property type="match status" value="1"/>
</dbReference>
<accession>Q9BEH0</accession>
<accession>Q9GKK2</accession>
<name>IL1RA_CANLF</name>
<organism>
    <name type="scientific">Canis lupus familiaris</name>
    <name type="common">Dog</name>
    <name type="synonym">Canis familiaris</name>
    <dbReference type="NCBI Taxonomy" id="9615"/>
    <lineage>
        <taxon>Eukaryota</taxon>
        <taxon>Metazoa</taxon>
        <taxon>Chordata</taxon>
        <taxon>Craniata</taxon>
        <taxon>Vertebrata</taxon>
        <taxon>Euteleostomi</taxon>
        <taxon>Mammalia</taxon>
        <taxon>Eutheria</taxon>
        <taxon>Laurasiatheria</taxon>
        <taxon>Carnivora</taxon>
        <taxon>Caniformia</taxon>
        <taxon>Canidae</taxon>
        <taxon>Canis</taxon>
    </lineage>
</organism>
<evidence type="ECO:0000250" key="1"/>
<evidence type="ECO:0000250" key="2">
    <source>
        <dbReference type="UniProtKB" id="P18510"/>
    </source>
</evidence>
<evidence type="ECO:0000250" key="3">
    <source>
        <dbReference type="UniProtKB" id="P25085"/>
    </source>
</evidence>
<evidence type="ECO:0000255" key="4"/>
<evidence type="ECO:0000305" key="5"/>
<reference key="1">
    <citation type="submission" date="2001-01" db="EMBL/GenBank/DDBJ databases">
        <title>Molecular cloning of canine interleukin-1 receptor antagonist (IL-1ra).</title>
        <authorList>
            <person name="Shin I.-S."/>
            <person name="Youn H.-Y."/>
        </authorList>
    </citation>
    <scope>NUCLEOTIDE SEQUENCE [MRNA]</scope>
</reference>
<reference key="2">
    <citation type="journal article" date="2001" name="Vet. Immunol. Immunopathol.">
        <title>Cloning of canine IL-1ra, TNFR and TIMP-2.</title>
        <authorList>
            <person name="Campbell S.E."/>
            <person name="Nasir L."/>
            <person name="Argyle D.J."/>
            <person name="Gault E.A."/>
            <person name="Duthie S."/>
            <person name="Bennett D."/>
        </authorList>
    </citation>
    <scope>NUCLEOTIDE SEQUENCE [MRNA]</scope>
</reference>
<sequence>METCRCPLSYLISFLLFLSHSETACRPLGKRPCRMQAFRIWDVNQKTFYLRNNQLVAGYLQGSNTKLEEKLDVVPVEPHAVFLGIHGGKLCLACVKSGDETRLQLEAVNITDLSKNKDQDKRFTFILSDSGPTTSFESAACPGWFLCTALEADRPVSLTNRPEEAMMVTKFYFQKE</sequence>